<evidence type="ECO:0000250" key="1">
    <source>
        <dbReference type="UniProtKB" id="P34405"/>
    </source>
</evidence>
<evidence type="ECO:0000255" key="2"/>
<evidence type="ECO:0000269" key="3">
    <source>
    </source>
</evidence>
<evidence type="ECO:0000303" key="4">
    <source>
    </source>
</evidence>
<evidence type="ECO:0000305" key="5"/>
<evidence type="ECO:0000305" key="6">
    <source>
    </source>
</evidence>
<proteinExistence type="evidence at protein level"/>
<protein>
    <recommendedName>
        <fullName evidence="4">Extended FMRFamide-4</fullName>
        <shortName evidence="4">FMRFa-4</shortName>
    </recommendedName>
</protein>
<organism>
    <name type="scientific">Karoophasma biedouwense</name>
    <name type="common">Gladiator</name>
    <name type="synonym">Heel-walker</name>
    <dbReference type="NCBI Taxonomy" id="253133"/>
    <lineage>
        <taxon>Eukaryota</taxon>
        <taxon>Metazoa</taxon>
        <taxon>Ecdysozoa</taxon>
        <taxon>Arthropoda</taxon>
        <taxon>Hexapoda</taxon>
        <taxon>Insecta</taxon>
        <taxon>Pterygota</taxon>
        <taxon>Neoptera</taxon>
        <taxon>Polyneoptera</taxon>
        <taxon>Mantophasmatodea</taxon>
        <taxon>Austrophasmatidae</taxon>
        <taxon>Karoophasma</taxon>
    </lineage>
</organism>
<reference evidence="5" key="1">
    <citation type="journal article" date="2012" name="Syst. Biol.">
        <title>Peptidomics-based phylogeny and biogeography of Mantophasmatodea (Hexapoda).</title>
        <authorList>
            <person name="Predel R."/>
            <person name="Neupert S."/>
            <person name="Huetteroth W."/>
            <person name="Kahnt J."/>
            <person name="Waidelich D."/>
            <person name="Roth S."/>
        </authorList>
    </citation>
    <scope>PROTEIN SEQUENCE</scope>
    <scope>AMIDATION AT LEU-9</scope>
    <source>
        <tissue evidence="3">Thoracic perisympathetic organs</tissue>
    </source>
</reference>
<feature type="peptide" id="PRO_0000421505" description="Extended FMRFamide-4" evidence="3">
    <location>
        <begin position="1"/>
        <end position="9"/>
    </location>
</feature>
<feature type="modified residue" description="Leucine amide" evidence="3">
    <location>
        <position position="9"/>
    </location>
</feature>
<feature type="unsure residue" description="L or I" evidence="3">
    <location>
        <position position="7"/>
    </location>
</feature>
<feature type="unsure residue" description="L or I" evidence="3">
    <location>
        <position position="9"/>
    </location>
</feature>
<sequence length="9" mass="993">GVDSSFLRL</sequence>
<accession>B3A065</accession>
<comment type="function">
    <text evidence="1">FMRFamides and FMRFamide-like peptides are neuropeptides.</text>
</comment>
<comment type="subcellular location">
    <subcellularLocation>
        <location evidence="6">Secreted</location>
    </subcellularLocation>
</comment>
<comment type="similarity">
    <text evidence="2">Belongs to the FARP (FMRF amide related peptide) family.</text>
</comment>
<keyword id="KW-0027">Amidation</keyword>
<keyword id="KW-0903">Direct protein sequencing</keyword>
<keyword id="KW-0527">Neuropeptide</keyword>
<keyword id="KW-0964">Secreted</keyword>
<name>FAR4_KARBI</name>
<dbReference type="GO" id="GO:0005576">
    <property type="term" value="C:extracellular region"/>
    <property type="evidence" value="ECO:0007669"/>
    <property type="project" value="UniProtKB-SubCell"/>
</dbReference>
<dbReference type="GO" id="GO:0007218">
    <property type="term" value="P:neuropeptide signaling pathway"/>
    <property type="evidence" value="ECO:0007669"/>
    <property type="project" value="UniProtKB-KW"/>
</dbReference>